<keyword id="KW-0963">Cytoplasm</keyword>
<keyword id="KW-0460">Magnesium</keyword>
<keyword id="KW-0479">Metal-binding</keyword>
<keyword id="KW-0548">Nucleotidyltransferase</keyword>
<keyword id="KW-0694">RNA-binding</keyword>
<keyword id="KW-0808">Transferase</keyword>
<name>PNP_STRSY</name>
<reference key="1">
    <citation type="journal article" date="2007" name="PLoS ONE">
        <title>A glimpse of streptococcal toxic shock syndrome from comparative genomics of S. suis 2 Chinese isolates.</title>
        <authorList>
            <person name="Chen C."/>
            <person name="Tang J."/>
            <person name="Dong W."/>
            <person name="Wang C."/>
            <person name="Feng Y."/>
            <person name="Wang J."/>
            <person name="Zheng F."/>
            <person name="Pan X."/>
            <person name="Liu D."/>
            <person name="Li M."/>
            <person name="Song Y."/>
            <person name="Zhu X."/>
            <person name="Sun H."/>
            <person name="Feng T."/>
            <person name="Guo Z."/>
            <person name="Ju A."/>
            <person name="Ge J."/>
            <person name="Dong Y."/>
            <person name="Sun W."/>
            <person name="Jiang Y."/>
            <person name="Wang J."/>
            <person name="Yan J."/>
            <person name="Yang H."/>
            <person name="Wang X."/>
            <person name="Gao G.F."/>
            <person name="Yang R."/>
            <person name="Wang J."/>
            <person name="Yu J."/>
        </authorList>
    </citation>
    <scope>NUCLEOTIDE SEQUENCE [LARGE SCALE GENOMIC DNA]</scope>
    <source>
        <strain>05ZYH33</strain>
    </source>
</reference>
<protein>
    <recommendedName>
        <fullName evidence="1">Polyribonucleotide nucleotidyltransferase</fullName>
        <ecNumber evidence="1">2.7.7.8</ecNumber>
    </recommendedName>
    <alternativeName>
        <fullName evidence="1">Polynucleotide phosphorylase</fullName>
        <shortName evidence="1">PNPase</shortName>
    </alternativeName>
</protein>
<dbReference type="EC" id="2.7.7.8" evidence="1"/>
<dbReference type="EMBL" id="CP000407">
    <property type="protein sequence ID" value="ABP90893.1"/>
    <property type="molecule type" value="Genomic_DNA"/>
</dbReference>
<dbReference type="SMR" id="A4VXQ4"/>
<dbReference type="STRING" id="391295.SSU05_1927"/>
<dbReference type="KEGG" id="ssu:SSU05_1927"/>
<dbReference type="eggNOG" id="COG1185">
    <property type="taxonomic scope" value="Bacteria"/>
</dbReference>
<dbReference type="HOGENOM" id="CLU_004217_2_2_9"/>
<dbReference type="GO" id="GO:0005829">
    <property type="term" value="C:cytosol"/>
    <property type="evidence" value="ECO:0007669"/>
    <property type="project" value="TreeGrafter"/>
</dbReference>
<dbReference type="GO" id="GO:0000175">
    <property type="term" value="F:3'-5'-RNA exonuclease activity"/>
    <property type="evidence" value="ECO:0007669"/>
    <property type="project" value="TreeGrafter"/>
</dbReference>
<dbReference type="GO" id="GO:0000287">
    <property type="term" value="F:magnesium ion binding"/>
    <property type="evidence" value="ECO:0007669"/>
    <property type="project" value="UniProtKB-UniRule"/>
</dbReference>
<dbReference type="GO" id="GO:0004654">
    <property type="term" value="F:polyribonucleotide nucleotidyltransferase activity"/>
    <property type="evidence" value="ECO:0007669"/>
    <property type="project" value="UniProtKB-UniRule"/>
</dbReference>
<dbReference type="GO" id="GO:0003723">
    <property type="term" value="F:RNA binding"/>
    <property type="evidence" value="ECO:0007669"/>
    <property type="project" value="UniProtKB-UniRule"/>
</dbReference>
<dbReference type="GO" id="GO:0006402">
    <property type="term" value="P:mRNA catabolic process"/>
    <property type="evidence" value="ECO:0007669"/>
    <property type="project" value="UniProtKB-UniRule"/>
</dbReference>
<dbReference type="GO" id="GO:0006396">
    <property type="term" value="P:RNA processing"/>
    <property type="evidence" value="ECO:0007669"/>
    <property type="project" value="InterPro"/>
</dbReference>
<dbReference type="CDD" id="cd02393">
    <property type="entry name" value="KH-I_PNPase"/>
    <property type="match status" value="1"/>
</dbReference>
<dbReference type="CDD" id="cd11363">
    <property type="entry name" value="RNase_PH_PNPase_1"/>
    <property type="match status" value="1"/>
</dbReference>
<dbReference type="CDD" id="cd11364">
    <property type="entry name" value="RNase_PH_PNPase_2"/>
    <property type="match status" value="1"/>
</dbReference>
<dbReference type="FunFam" id="3.30.1370.10:FF:000001">
    <property type="entry name" value="Polyribonucleotide nucleotidyltransferase"/>
    <property type="match status" value="1"/>
</dbReference>
<dbReference type="FunFam" id="3.30.230.70:FF:000001">
    <property type="entry name" value="Polyribonucleotide nucleotidyltransferase"/>
    <property type="match status" value="1"/>
</dbReference>
<dbReference type="FunFam" id="3.30.230.70:FF:000002">
    <property type="entry name" value="Polyribonucleotide nucleotidyltransferase"/>
    <property type="match status" value="1"/>
</dbReference>
<dbReference type="Gene3D" id="3.30.230.70">
    <property type="entry name" value="GHMP Kinase, N-terminal domain"/>
    <property type="match status" value="2"/>
</dbReference>
<dbReference type="Gene3D" id="3.30.1370.10">
    <property type="entry name" value="K Homology domain, type 1"/>
    <property type="match status" value="1"/>
</dbReference>
<dbReference type="Gene3D" id="2.40.50.140">
    <property type="entry name" value="Nucleic acid-binding proteins"/>
    <property type="match status" value="1"/>
</dbReference>
<dbReference type="HAMAP" id="MF_01595">
    <property type="entry name" value="PNPase"/>
    <property type="match status" value="1"/>
</dbReference>
<dbReference type="InterPro" id="IPR001247">
    <property type="entry name" value="ExoRNase_PH_dom1"/>
</dbReference>
<dbReference type="InterPro" id="IPR015847">
    <property type="entry name" value="ExoRNase_PH_dom2"/>
</dbReference>
<dbReference type="InterPro" id="IPR036345">
    <property type="entry name" value="ExoRNase_PH_dom2_sf"/>
</dbReference>
<dbReference type="InterPro" id="IPR004087">
    <property type="entry name" value="KH_dom"/>
</dbReference>
<dbReference type="InterPro" id="IPR004088">
    <property type="entry name" value="KH_dom_type_1"/>
</dbReference>
<dbReference type="InterPro" id="IPR036612">
    <property type="entry name" value="KH_dom_type_1_sf"/>
</dbReference>
<dbReference type="InterPro" id="IPR012340">
    <property type="entry name" value="NA-bd_OB-fold"/>
</dbReference>
<dbReference type="InterPro" id="IPR012162">
    <property type="entry name" value="PNPase"/>
</dbReference>
<dbReference type="InterPro" id="IPR027408">
    <property type="entry name" value="PNPase/RNase_PH_dom_sf"/>
</dbReference>
<dbReference type="InterPro" id="IPR015848">
    <property type="entry name" value="PNPase_PH_RNA-bd_bac/org-type"/>
</dbReference>
<dbReference type="InterPro" id="IPR036456">
    <property type="entry name" value="PNPase_PH_RNA-bd_sf"/>
</dbReference>
<dbReference type="InterPro" id="IPR020568">
    <property type="entry name" value="Ribosomal_Su5_D2-typ_SF"/>
</dbReference>
<dbReference type="InterPro" id="IPR003029">
    <property type="entry name" value="S1_domain"/>
</dbReference>
<dbReference type="NCBIfam" id="TIGR03591">
    <property type="entry name" value="polynuc_phos"/>
    <property type="match status" value="1"/>
</dbReference>
<dbReference type="NCBIfam" id="NF008805">
    <property type="entry name" value="PRK11824.1"/>
    <property type="match status" value="1"/>
</dbReference>
<dbReference type="PANTHER" id="PTHR11252">
    <property type="entry name" value="POLYRIBONUCLEOTIDE NUCLEOTIDYLTRANSFERASE"/>
    <property type="match status" value="1"/>
</dbReference>
<dbReference type="PANTHER" id="PTHR11252:SF0">
    <property type="entry name" value="POLYRIBONUCLEOTIDE NUCLEOTIDYLTRANSFERASE 1, MITOCHONDRIAL"/>
    <property type="match status" value="1"/>
</dbReference>
<dbReference type="Pfam" id="PF00013">
    <property type="entry name" value="KH_1"/>
    <property type="match status" value="1"/>
</dbReference>
<dbReference type="Pfam" id="PF03726">
    <property type="entry name" value="PNPase"/>
    <property type="match status" value="1"/>
</dbReference>
<dbReference type="Pfam" id="PF01138">
    <property type="entry name" value="RNase_PH"/>
    <property type="match status" value="2"/>
</dbReference>
<dbReference type="Pfam" id="PF03725">
    <property type="entry name" value="RNase_PH_C"/>
    <property type="match status" value="2"/>
</dbReference>
<dbReference type="Pfam" id="PF00575">
    <property type="entry name" value="S1"/>
    <property type="match status" value="1"/>
</dbReference>
<dbReference type="PIRSF" id="PIRSF005499">
    <property type="entry name" value="PNPase"/>
    <property type="match status" value="1"/>
</dbReference>
<dbReference type="SMART" id="SM00322">
    <property type="entry name" value="KH"/>
    <property type="match status" value="1"/>
</dbReference>
<dbReference type="SMART" id="SM00316">
    <property type="entry name" value="S1"/>
    <property type="match status" value="1"/>
</dbReference>
<dbReference type="SUPFAM" id="SSF54791">
    <property type="entry name" value="Eukaryotic type KH-domain (KH-domain type I)"/>
    <property type="match status" value="1"/>
</dbReference>
<dbReference type="SUPFAM" id="SSF50249">
    <property type="entry name" value="Nucleic acid-binding proteins"/>
    <property type="match status" value="1"/>
</dbReference>
<dbReference type="SUPFAM" id="SSF46915">
    <property type="entry name" value="Polynucleotide phosphorylase/guanosine pentaphosphate synthase (PNPase/GPSI), domain 3"/>
    <property type="match status" value="1"/>
</dbReference>
<dbReference type="SUPFAM" id="SSF55666">
    <property type="entry name" value="Ribonuclease PH domain 2-like"/>
    <property type="match status" value="2"/>
</dbReference>
<dbReference type="SUPFAM" id="SSF54211">
    <property type="entry name" value="Ribosomal protein S5 domain 2-like"/>
    <property type="match status" value="2"/>
</dbReference>
<dbReference type="PROSITE" id="PS50084">
    <property type="entry name" value="KH_TYPE_1"/>
    <property type="match status" value="1"/>
</dbReference>
<dbReference type="PROSITE" id="PS50126">
    <property type="entry name" value="S1"/>
    <property type="match status" value="1"/>
</dbReference>
<evidence type="ECO:0000255" key="1">
    <source>
        <dbReference type="HAMAP-Rule" id="MF_01595"/>
    </source>
</evidence>
<evidence type="ECO:0000256" key="2">
    <source>
        <dbReference type="SAM" id="MobiDB-lite"/>
    </source>
</evidence>
<accession>A4VXQ4</accession>
<organism>
    <name type="scientific">Streptococcus suis (strain 05ZYH33)</name>
    <dbReference type="NCBI Taxonomy" id="391295"/>
    <lineage>
        <taxon>Bacteria</taxon>
        <taxon>Bacillati</taxon>
        <taxon>Bacillota</taxon>
        <taxon>Bacilli</taxon>
        <taxon>Lactobacillales</taxon>
        <taxon>Streptococcaceae</taxon>
        <taxon>Streptococcus</taxon>
    </lineage>
</organism>
<proteinExistence type="inferred from homology"/>
<sequence length="739" mass="81297">MSKQVFETVFAGKKLVVETGQVAKQANGAVVVRYGDSTVLTAAVMSKKMATGDFFPLQVNYEEKMYAAGKFPGGWMKREGRPSTDATLTARLIDRPIRPMFAEGFRNEVQVINTVLSYDPDASAPMAAMFGSSLALAISDIPFNGPIAGVQVGYVNGELIINPDQAQQEASLLELTVAGNKDAINMVESGAKELSEEVMLEALLKGHAAIQELLDFQNQIVAAVGKEKADVELLQVDPELQAEIVAAYNDDLKKAVQVEEKLAREDATNAVRETVIATYEEKYAEHEEFDRIMRDVHEILELMEHTEVRRLITEDKVRPDGRRVDEIRPLDAEVDFLPNVHGSGLFTRGQTQALSVLTLAPMGETQIIDGLDDEYKKRFLHHYNFPQYSVGSTGRYGAPGRREIGHGALGERALEQVLPSLEDFPYAIRLVAEVLESNGSSSQASITAGTLALMAGGVPIKAPVAGIAMGLISDGTNYTVLTDIQGLEDHFGDMDFKVAGTRDGITALQMDIKIDGITPQILEEALAQAKKARFEILDVIEATIPEVRPDLAPTAPKIDTIKIDVDKIKIVIGKGGETIDKIIAETGVKIDIDEDGLVAIFSPDRAAIERTKEIIAGLVREAKVDEVFQAKVVRLEKFGAFVNLFDKTDALVHVSEMAWTRVNKPEDLVEVGDVVDVKVIKIDDKGRIDASMKALLPKPEGYVEPEKRERSEKPRRHKEHKEKKDNNFGEFKFHKVDKK</sequence>
<comment type="function">
    <text evidence="1">Involved in mRNA degradation. Catalyzes the phosphorolysis of single-stranded polyribonucleotides processively in the 3'- to 5'-direction.</text>
</comment>
<comment type="catalytic activity">
    <reaction evidence="1">
        <text>RNA(n+1) + phosphate = RNA(n) + a ribonucleoside 5'-diphosphate</text>
        <dbReference type="Rhea" id="RHEA:22096"/>
        <dbReference type="Rhea" id="RHEA-COMP:14527"/>
        <dbReference type="Rhea" id="RHEA-COMP:17342"/>
        <dbReference type="ChEBI" id="CHEBI:43474"/>
        <dbReference type="ChEBI" id="CHEBI:57930"/>
        <dbReference type="ChEBI" id="CHEBI:140395"/>
        <dbReference type="EC" id="2.7.7.8"/>
    </reaction>
</comment>
<comment type="cofactor">
    <cofactor evidence="1">
        <name>Mg(2+)</name>
        <dbReference type="ChEBI" id="CHEBI:18420"/>
    </cofactor>
</comment>
<comment type="subcellular location">
    <subcellularLocation>
        <location evidence="1">Cytoplasm</location>
    </subcellularLocation>
</comment>
<comment type="similarity">
    <text evidence="1">Belongs to the polyribonucleotide nucleotidyltransferase family.</text>
</comment>
<feature type="chain" id="PRO_0000329882" description="Polyribonucleotide nucleotidyltransferase">
    <location>
        <begin position="1"/>
        <end position="739"/>
    </location>
</feature>
<feature type="domain" description="KH" evidence="1">
    <location>
        <begin position="556"/>
        <end position="615"/>
    </location>
</feature>
<feature type="domain" description="S1 motif" evidence="1">
    <location>
        <begin position="625"/>
        <end position="693"/>
    </location>
</feature>
<feature type="region of interest" description="Disordered" evidence="2">
    <location>
        <begin position="699"/>
        <end position="739"/>
    </location>
</feature>
<feature type="compositionally biased region" description="Basic and acidic residues" evidence="2">
    <location>
        <begin position="722"/>
        <end position="739"/>
    </location>
</feature>
<feature type="binding site" evidence="1">
    <location>
        <position position="489"/>
    </location>
    <ligand>
        <name>Mg(2+)</name>
        <dbReference type="ChEBI" id="CHEBI:18420"/>
    </ligand>
</feature>
<feature type="binding site" evidence="1">
    <location>
        <position position="495"/>
    </location>
    <ligand>
        <name>Mg(2+)</name>
        <dbReference type="ChEBI" id="CHEBI:18420"/>
    </ligand>
</feature>
<gene>
    <name evidence="1" type="primary">pnp</name>
    <name type="ordered locus">SSU05_1927</name>
</gene>